<reference key="1">
    <citation type="journal article" date="2004" name="Nat. Genet.">
        <title>Complete sequencing and characterization of 21,243 full-length human cDNAs.</title>
        <authorList>
            <person name="Ota T."/>
            <person name="Suzuki Y."/>
            <person name="Nishikawa T."/>
            <person name="Otsuki T."/>
            <person name="Sugiyama T."/>
            <person name="Irie R."/>
            <person name="Wakamatsu A."/>
            <person name="Hayashi K."/>
            <person name="Sato H."/>
            <person name="Nagai K."/>
            <person name="Kimura K."/>
            <person name="Makita H."/>
            <person name="Sekine M."/>
            <person name="Obayashi M."/>
            <person name="Nishi T."/>
            <person name="Shibahara T."/>
            <person name="Tanaka T."/>
            <person name="Ishii S."/>
            <person name="Yamamoto J."/>
            <person name="Saito K."/>
            <person name="Kawai Y."/>
            <person name="Isono Y."/>
            <person name="Nakamura Y."/>
            <person name="Nagahari K."/>
            <person name="Murakami K."/>
            <person name="Yasuda T."/>
            <person name="Iwayanagi T."/>
            <person name="Wagatsuma M."/>
            <person name="Shiratori A."/>
            <person name="Sudo H."/>
            <person name="Hosoiri T."/>
            <person name="Kaku Y."/>
            <person name="Kodaira H."/>
            <person name="Kondo H."/>
            <person name="Sugawara M."/>
            <person name="Takahashi M."/>
            <person name="Kanda K."/>
            <person name="Yokoi T."/>
            <person name="Furuya T."/>
            <person name="Kikkawa E."/>
            <person name="Omura Y."/>
            <person name="Abe K."/>
            <person name="Kamihara K."/>
            <person name="Katsuta N."/>
            <person name="Sato K."/>
            <person name="Tanikawa M."/>
            <person name="Yamazaki M."/>
            <person name="Ninomiya K."/>
            <person name="Ishibashi T."/>
            <person name="Yamashita H."/>
            <person name="Murakawa K."/>
            <person name="Fujimori K."/>
            <person name="Tanai H."/>
            <person name="Kimata M."/>
            <person name="Watanabe M."/>
            <person name="Hiraoka S."/>
            <person name="Chiba Y."/>
            <person name="Ishida S."/>
            <person name="Ono Y."/>
            <person name="Takiguchi S."/>
            <person name="Watanabe S."/>
            <person name="Yosida M."/>
            <person name="Hotuta T."/>
            <person name="Kusano J."/>
            <person name="Kanehori K."/>
            <person name="Takahashi-Fujii A."/>
            <person name="Hara H."/>
            <person name="Tanase T.-O."/>
            <person name="Nomura Y."/>
            <person name="Togiya S."/>
            <person name="Komai F."/>
            <person name="Hara R."/>
            <person name="Takeuchi K."/>
            <person name="Arita M."/>
            <person name="Imose N."/>
            <person name="Musashino K."/>
            <person name="Yuuki H."/>
            <person name="Oshima A."/>
            <person name="Sasaki N."/>
            <person name="Aotsuka S."/>
            <person name="Yoshikawa Y."/>
            <person name="Matsunawa H."/>
            <person name="Ichihara T."/>
            <person name="Shiohata N."/>
            <person name="Sano S."/>
            <person name="Moriya S."/>
            <person name="Momiyama H."/>
            <person name="Satoh N."/>
            <person name="Takami S."/>
            <person name="Terashima Y."/>
            <person name="Suzuki O."/>
            <person name="Nakagawa S."/>
            <person name="Senoh A."/>
            <person name="Mizoguchi H."/>
            <person name="Goto Y."/>
            <person name="Shimizu F."/>
            <person name="Wakebe H."/>
            <person name="Hishigaki H."/>
            <person name="Watanabe T."/>
            <person name="Sugiyama A."/>
            <person name="Takemoto M."/>
            <person name="Kawakami B."/>
            <person name="Yamazaki M."/>
            <person name="Watanabe K."/>
            <person name="Kumagai A."/>
            <person name="Itakura S."/>
            <person name="Fukuzumi Y."/>
            <person name="Fujimori Y."/>
            <person name="Komiyama M."/>
            <person name="Tashiro H."/>
            <person name="Tanigami A."/>
            <person name="Fujiwara T."/>
            <person name="Ono T."/>
            <person name="Yamada K."/>
            <person name="Fujii Y."/>
            <person name="Ozaki K."/>
            <person name="Hirao M."/>
            <person name="Ohmori Y."/>
            <person name="Kawabata A."/>
            <person name="Hikiji T."/>
            <person name="Kobatake N."/>
            <person name="Inagaki H."/>
            <person name="Ikema Y."/>
            <person name="Okamoto S."/>
            <person name="Okitani R."/>
            <person name="Kawakami T."/>
            <person name="Noguchi S."/>
            <person name="Itoh T."/>
            <person name="Shigeta K."/>
            <person name="Senba T."/>
            <person name="Matsumura K."/>
            <person name="Nakajima Y."/>
            <person name="Mizuno T."/>
            <person name="Morinaga M."/>
            <person name="Sasaki M."/>
            <person name="Togashi T."/>
            <person name="Oyama M."/>
            <person name="Hata H."/>
            <person name="Watanabe M."/>
            <person name="Komatsu T."/>
            <person name="Mizushima-Sugano J."/>
            <person name="Satoh T."/>
            <person name="Shirai Y."/>
            <person name="Takahashi Y."/>
            <person name="Nakagawa K."/>
            <person name="Okumura K."/>
            <person name="Nagase T."/>
            <person name="Nomura N."/>
            <person name="Kikuchi H."/>
            <person name="Masuho Y."/>
            <person name="Yamashita R."/>
            <person name="Nakai K."/>
            <person name="Yada T."/>
            <person name="Nakamura Y."/>
            <person name="Ohara O."/>
            <person name="Isogai T."/>
            <person name="Sugano S."/>
        </authorList>
    </citation>
    <scope>NUCLEOTIDE SEQUENCE [LARGE SCALE MRNA]</scope>
    <scope>VARIANT HIS-117</scope>
    <source>
        <tissue>Lung</tissue>
    </source>
</reference>
<reference key="2">
    <citation type="journal article" date="2005" name="Nature">
        <title>Generation and annotation of the DNA sequences of human chromosomes 2 and 4.</title>
        <authorList>
            <person name="Hillier L.W."/>
            <person name="Graves T.A."/>
            <person name="Fulton R.S."/>
            <person name="Fulton L.A."/>
            <person name="Pepin K.H."/>
            <person name="Minx P."/>
            <person name="Wagner-McPherson C."/>
            <person name="Layman D."/>
            <person name="Wylie K."/>
            <person name="Sekhon M."/>
            <person name="Becker M.C."/>
            <person name="Fewell G.A."/>
            <person name="Delehaunty K.D."/>
            <person name="Miner T.L."/>
            <person name="Nash W.E."/>
            <person name="Kremitzki C."/>
            <person name="Oddy L."/>
            <person name="Du H."/>
            <person name="Sun H."/>
            <person name="Bradshaw-Cordum H."/>
            <person name="Ali J."/>
            <person name="Carter J."/>
            <person name="Cordes M."/>
            <person name="Harris A."/>
            <person name="Isak A."/>
            <person name="van Brunt A."/>
            <person name="Nguyen C."/>
            <person name="Du F."/>
            <person name="Courtney L."/>
            <person name="Kalicki J."/>
            <person name="Ozersky P."/>
            <person name="Abbott S."/>
            <person name="Armstrong J."/>
            <person name="Belter E.A."/>
            <person name="Caruso L."/>
            <person name="Cedroni M."/>
            <person name="Cotton M."/>
            <person name="Davidson T."/>
            <person name="Desai A."/>
            <person name="Elliott G."/>
            <person name="Erb T."/>
            <person name="Fronick C."/>
            <person name="Gaige T."/>
            <person name="Haakenson W."/>
            <person name="Haglund K."/>
            <person name="Holmes A."/>
            <person name="Harkins R."/>
            <person name="Kim K."/>
            <person name="Kruchowski S.S."/>
            <person name="Strong C.M."/>
            <person name="Grewal N."/>
            <person name="Goyea E."/>
            <person name="Hou S."/>
            <person name="Levy A."/>
            <person name="Martinka S."/>
            <person name="Mead K."/>
            <person name="McLellan M.D."/>
            <person name="Meyer R."/>
            <person name="Randall-Maher J."/>
            <person name="Tomlinson C."/>
            <person name="Dauphin-Kohlberg S."/>
            <person name="Kozlowicz-Reilly A."/>
            <person name="Shah N."/>
            <person name="Swearengen-Shahid S."/>
            <person name="Snider J."/>
            <person name="Strong J.T."/>
            <person name="Thompson J."/>
            <person name="Yoakum M."/>
            <person name="Leonard S."/>
            <person name="Pearman C."/>
            <person name="Trani L."/>
            <person name="Radionenko M."/>
            <person name="Waligorski J.E."/>
            <person name="Wang C."/>
            <person name="Rock S.M."/>
            <person name="Tin-Wollam A.-M."/>
            <person name="Maupin R."/>
            <person name="Latreille P."/>
            <person name="Wendl M.C."/>
            <person name="Yang S.-P."/>
            <person name="Pohl C."/>
            <person name="Wallis J.W."/>
            <person name="Spieth J."/>
            <person name="Bieri T.A."/>
            <person name="Berkowicz N."/>
            <person name="Nelson J.O."/>
            <person name="Osborne J."/>
            <person name="Ding L."/>
            <person name="Meyer R."/>
            <person name="Sabo A."/>
            <person name="Shotland Y."/>
            <person name="Sinha P."/>
            <person name="Wohldmann P.E."/>
            <person name="Cook L.L."/>
            <person name="Hickenbotham M.T."/>
            <person name="Eldred J."/>
            <person name="Williams D."/>
            <person name="Jones T.A."/>
            <person name="She X."/>
            <person name="Ciccarelli F.D."/>
            <person name="Izaurralde E."/>
            <person name="Taylor J."/>
            <person name="Schmutz J."/>
            <person name="Myers R.M."/>
            <person name="Cox D.R."/>
            <person name="Huang X."/>
            <person name="McPherson J.D."/>
            <person name="Mardis E.R."/>
            <person name="Clifton S.W."/>
            <person name="Warren W.C."/>
            <person name="Chinwalla A.T."/>
            <person name="Eddy S.R."/>
            <person name="Marra M.A."/>
            <person name="Ovcharenko I."/>
            <person name="Furey T.S."/>
            <person name="Miller W."/>
            <person name="Eichler E.E."/>
            <person name="Bork P."/>
            <person name="Suyama M."/>
            <person name="Torrents D."/>
            <person name="Waterston R.H."/>
            <person name="Wilson R.K."/>
        </authorList>
    </citation>
    <scope>NUCLEOTIDE SEQUENCE [LARGE SCALE GENOMIC DNA]</scope>
</reference>
<reference key="3">
    <citation type="submission" date="2006-12" db="EMBL/GenBank/DDBJ databases">
        <authorList>
            <person name="Mural R.J."/>
            <person name="Istrail S."/>
            <person name="Sutton G.G."/>
            <person name="Florea L."/>
            <person name="Halpern A.L."/>
            <person name="Mobarry C.M."/>
            <person name="Lippert R."/>
            <person name="Walenz B."/>
            <person name="Shatkay H."/>
            <person name="Dew I."/>
            <person name="Miller J.R."/>
            <person name="Flanigan M.J."/>
            <person name="Edwards N.J."/>
            <person name="Bolanos R."/>
            <person name="Fasulo D."/>
            <person name="Halldorsson B.V."/>
            <person name="Hannenhalli S."/>
            <person name="Turner R."/>
            <person name="Yooseph S."/>
            <person name="Lu F."/>
            <person name="Nusskern D.R."/>
            <person name="Shue B.C."/>
            <person name="Zheng X.H."/>
            <person name="Zhong F."/>
            <person name="Delcher A.L."/>
            <person name="Huson D.H."/>
            <person name="Kravitz S.A."/>
            <person name="Mouchard L."/>
            <person name="Reinert K."/>
            <person name="Remington K.A."/>
            <person name="Clark A.G."/>
            <person name="Waterman M.S."/>
            <person name="Eichler E.E."/>
            <person name="Adams M.D."/>
            <person name="Hunkapiller M.W."/>
            <person name="Myers E.W."/>
            <person name="Venter J.C."/>
        </authorList>
    </citation>
    <scope>NUCLEOTIDE SEQUENCE [LARGE SCALE GENOMIC DNA]</scope>
    <scope>VARIANT HIS-117</scope>
</reference>
<reference key="4">
    <citation type="journal article" date="2004" name="Genome Res.">
        <title>The status, quality, and expansion of the NIH full-length cDNA project: the Mammalian Gene Collection (MGC).</title>
        <authorList>
            <consortium name="The MGC Project Team"/>
        </authorList>
    </citation>
    <scope>NUCLEOTIDE SEQUENCE [LARGE SCALE MRNA]</scope>
    <scope>VARIANT HIS-117</scope>
    <source>
        <tissue>Brain</tissue>
    </source>
</reference>
<reference key="5">
    <citation type="journal article" date="2007" name="BMC Genomics">
        <title>The full-ORF clone resource of the German cDNA consortium.</title>
        <authorList>
            <person name="Bechtel S."/>
            <person name="Rosenfelder H."/>
            <person name="Duda A."/>
            <person name="Schmidt C.P."/>
            <person name="Ernst U."/>
            <person name="Wellenreuther R."/>
            <person name="Mehrle A."/>
            <person name="Schuster C."/>
            <person name="Bahr A."/>
            <person name="Bloecker H."/>
            <person name="Heubner D."/>
            <person name="Hoerlein A."/>
            <person name="Michel G."/>
            <person name="Wedler H."/>
            <person name="Koehrer K."/>
            <person name="Ottenwaelder B."/>
            <person name="Poustka A."/>
            <person name="Wiemann S."/>
            <person name="Schupp I."/>
        </authorList>
    </citation>
    <scope>NUCLEOTIDE SEQUENCE [LARGE SCALE MRNA] OF 146-665</scope>
    <source>
        <tissue>Heart</tissue>
    </source>
</reference>
<dbReference type="EMBL" id="AK055552">
    <property type="protein sequence ID" value="BAB70953.1"/>
    <property type="molecule type" value="mRNA"/>
</dbReference>
<dbReference type="EMBL" id="AC073834">
    <property type="status" value="NOT_ANNOTATED_CDS"/>
    <property type="molecule type" value="Genomic_DNA"/>
</dbReference>
<dbReference type="EMBL" id="CH471058">
    <property type="protein sequence ID" value="EAX11054.1"/>
    <property type="molecule type" value="mRNA"/>
</dbReference>
<dbReference type="EMBL" id="BC033795">
    <property type="protein sequence ID" value="AAH33795.1"/>
    <property type="molecule type" value="mRNA"/>
</dbReference>
<dbReference type="EMBL" id="BX647620">
    <property type="protein sequence ID" value="CAH56200.1"/>
    <property type="molecule type" value="mRNA"/>
</dbReference>
<dbReference type="CCDS" id="CCDS42784.1"/>
<dbReference type="RefSeq" id="NP_689730.2">
    <property type="nucleotide sequence ID" value="NM_152517.3"/>
</dbReference>
<dbReference type="SMR" id="Q8N4P2"/>
<dbReference type="BioGRID" id="127321">
    <property type="interactions" value="59"/>
</dbReference>
<dbReference type="ComplexPortal" id="CPX-5022">
    <property type="entry name" value="Intraflagellar transport complex B"/>
</dbReference>
<dbReference type="CORUM" id="Q8N4P2"/>
<dbReference type="FunCoup" id="Q8N4P2">
    <property type="interactions" value="179"/>
</dbReference>
<dbReference type="IntAct" id="Q8N4P2">
    <property type="interactions" value="54"/>
</dbReference>
<dbReference type="MINT" id="Q8N4P2"/>
<dbReference type="STRING" id="9606.ENSP00000386181"/>
<dbReference type="GlyGen" id="Q8N4P2">
    <property type="glycosylation" value="1 site, 1 O-linked glycan (1 site)"/>
</dbReference>
<dbReference type="iPTMnet" id="Q8N4P2"/>
<dbReference type="PhosphoSitePlus" id="Q8N4P2"/>
<dbReference type="BioMuta" id="TTC30B"/>
<dbReference type="DMDM" id="313104039"/>
<dbReference type="jPOST" id="Q8N4P2"/>
<dbReference type="MassIVE" id="Q8N4P2"/>
<dbReference type="PaxDb" id="9606-ENSP00000386181"/>
<dbReference type="PeptideAtlas" id="Q8N4P2"/>
<dbReference type="ProteomicsDB" id="71952"/>
<dbReference type="Pumba" id="Q8N4P2"/>
<dbReference type="Antibodypedia" id="33925">
    <property type="antibodies" value="103 antibodies from 17 providers"/>
</dbReference>
<dbReference type="DNASU" id="150737"/>
<dbReference type="Ensembl" id="ENST00000408939.4">
    <property type="protein sequence ID" value="ENSP00000386181.2"/>
    <property type="gene ID" value="ENSG00000196659.10"/>
</dbReference>
<dbReference type="GeneID" id="150737"/>
<dbReference type="KEGG" id="hsa:150737"/>
<dbReference type="MANE-Select" id="ENST00000408939.4">
    <property type="protein sequence ID" value="ENSP00000386181.2"/>
    <property type="RefSeq nucleotide sequence ID" value="NM_152517.3"/>
    <property type="RefSeq protein sequence ID" value="NP_689730.2"/>
</dbReference>
<dbReference type="UCSC" id="uc002uln.4">
    <property type="organism name" value="human"/>
</dbReference>
<dbReference type="AGR" id="HGNC:26425"/>
<dbReference type="CTD" id="150737"/>
<dbReference type="DisGeNET" id="150737"/>
<dbReference type="GeneCards" id="IFT70B"/>
<dbReference type="HGNC" id="HGNC:26425">
    <property type="gene designation" value="IFT70B"/>
</dbReference>
<dbReference type="HPA" id="ENSG00000196659">
    <property type="expression patterns" value="Low tissue specificity"/>
</dbReference>
<dbReference type="MIM" id="620742">
    <property type="type" value="gene"/>
</dbReference>
<dbReference type="neXtProt" id="NX_Q8N4P2"/>
<dbReference type="OpenTargets" id="ENSG00000196659"/>
<dbReference type="PharmGKB" id="PA145147835"/>
<dbReference type="VEuPathDB" id="HostDB:ENSG00000196659"/>
<dbReference type="eggNOG" id="KOG4340">
    <property type="taxonomic scope" value="Eukaryota"/>
</dbReference>
<dbReference type="GeneTree" id="ENSGT00390000010116"/>
<dbReference type="HOGENOM" id="CLU_023760_0_0_1"/>
<dbReference type="InParanoid" id="Q8N4P2"/>
<dbReference type="OMA" id="CCKHELY"/>
<dbReference type="OrthoDB" id="5080at9604"/>
<dbReference type="PAN-GO" id="Q8N4P2">
    <property type="GO annotations" value="4 GO annotations based on evolutionary models"/>
</dbReference>
<dbReference type="PhylomeDB" id="Q8N4P2"/>
<dbReference type="TreeFam" id="TF314592"/>
<dbReference type="PathwayCommons" id="Q8N4P2"/>
<dbReference type="Reactome" id="R-HSA-5620924">
    <property type="pathway name" value="Intraflagellar transport"/>
</dbReference>
<dbReference type="SignaLink" id="Q8N4P2"/>
<dbReference type="BioGRID-ORCS" id="150737">
    <property type="hits" value="14 hits in 1149 CRISPR screens"/>
</dbReference>
<dbReference type="GenomeRNAi" id="150737"/>
<dbReference type="Pharos" id="Q8N4P2">
    <property type="development level" value="Tbio"/>
</dbReference>
<dbReference type="PRO" id="PR:Q8N4P2"/>
<dbReference type="Proteomes" id="UP000005640">
    <property type="component" value="Chromosome 2"/>
</dbReference>
<dbReference type="RNAct" id="Q8N4P2">
    <property type="molecule type" value="protein"/>
</dbReference>
<dbReference type="Bgee" id="ENSG00000196659">
    <property type="expression patterns" value="Expressed in bronchial epithelial cell and 138 other cell types or tissues"/>
</dbReference>
<dbReference type="GO" id="GO:0005879">
    <property type="term" value="C:axonemal microtubule"/>
    <property type="evidence" value="ECO:0000318"/>
    <property type="project" value="GO_Central"/>
</dbReference>
<dbReference type="GO" id="GO:0097542">
    <property type="term" value="C:ciliary tip"/>
    <property type="evidence" value="ECO:0000304"/>
    <property type="project" value="Reactome"/>
</dbReference>
<dbReference type="GO" id="GO:0005929">
    <property type="term" value="C:cilium"/>
    <property type="evidence" value="ECO:0000304"/>
    <property type="project" value="Reactome"/>
</dbReference>
<dbReference type="GO" id="GO:0030992">
    <property type="term" value="C:intraciliary transport particle B"/>
    <property type="evidence" value="ECO:0000353"/>
    <property type="project" value="ComplexPortal"/>
</dbReference>
<dbReference type="GO" id="GO:0120170">
    <property type="term" value="F:intraciliary transport particle B binding"/>
    <property type="evidence" value="ECO:0000318"/>
    <property type="project" value="GO_Central"/>
</dbReference>
<dbReference type="GO" id="GO:0060271">
    <property type="term" value="P:cilium assembly"/>
    <property type="evidence" value="ECO:0000303"/>
    <property type="project" value="ComplexPortal"/>
</dbReference>
<dbReference type="GO" id="GO:0035720">
    <property type="term" value="P:intraciliary anterograde transport"/>
    <property type="evidence" value="ECO:0000303"/>
    <property type="project" value="ComplexPortal"/>
</dbReference>
<dbReference type="GO" id="GO:0042073">
    <property type="term" value="P:intraciliary transport"/>
    <property type="evidence" value="ECO:0000318"/>
    <property type="project" value="GO_Central"/>
</dbReference>
<dbReference type="FunFam" id="1.25.40.10:FF:000226">
    <property type="entry name" value="Tetratricopeptide repeat protein 30A"/>
    <property type="match status" value="1"/>
</dbReference>
<dbReference type="FunFam" id="1.25.40.10:FF:000211">
    <property type="entry name" value="tetratricopeptide repeat protein 30B"/>
    <property type="match status" value="1"/>
</dbReference>
<dbReference type="Gene3D" id="1.25.40.10">
    <property type="entry name" value="Tetratricopeptide repeat domain"/>
    <property type="match status" value="2"/>
</dbReference>
<dbReference type="InterPro" id="IPR011990">
    <property type="entry name" value="TPR-like_helical_dom_sf"/>
</dbReference>
<dbReference type="InterPro" id="IPR019734">
    <property type="entry name" value="TPR_rpt"/>
</dbReference>
<dbReference type="InterPro" id="IPR039941">
    <property type="entry name" value="TT30"/>
</dbReference>
<dbReference type="PANTHER" id="PTHR20931:SF9">
    <property type="entry name" value="INTRAFLAGELLAR TRANSPORT PROTEIN 70B"/>
    <property type="match status" value="1"/>
</dbReference>
<dbReference type="PANTHER" id="PTHR20931">
    <property type="entry name" value="TETRATRICOPEPTIDE REPEAT PROTEIN 30"/>
    <property type="match status" value="1"/>
</dbReference>
<dbReference type="SMART" id="SM00028">
    <property type="entry name" value="TPR"/>
    <property type="match status" value="4"/>
</dbReference>
<dbReference type="SUPFAM" id="SSF48452">
    <property type="entry name" value="TPR-like"/>
    <property type="match status" value="3"/>
</dbReference>
<dbReference type="PROSITE" id="PS50293">
    <property type="entry name" value="TPR_REGION"/>
    <property type="match status" value="2"/>
</dbReference>
<sequence>MAGLSGAQIPDGEFTAVVYRLIRNARYAEAVQLLGGELQRSPRSRAGLSLLGYCYYRLQEFALAAECYEQLGQLHPELEQYRLYQAQALYKACLYAEATRVAFLLLDNPAYHSRVLRLQAAIKYSEGDLPGSRSLVEQLPSREGGEESGGENETDGQINLGCLLYKEGQYEAACSKFFAALQASGYQPDLSYNLALAYYSSRQYASALKHIAEIIERGIRQHPELGVGMTTEGIDVRSVGNTLVLHQTALVEAFNLKAAIEYQLRNYEAAQEALTDMPPRAEEELDPVTLHNQALMNMDARPTEGFEKLQFLLQQNPFPPETFGNLLLLYCKYEYFDLAADVLAENAHLIYKFLTPYLYDFLDAVITCQTAPEEAFIKLDGLAGMLTEVLRKLTIQVQEARHNRDDEAIKKAVNEYDETMEKYIPVLMAQAKIYWNLENYPMVEKIFRKSVEFCNDHDVWKLNVAHVLFMQENKYKEAIGFYEPIVKKHYDNILNVSAIVLANLCVSYIMTSQNEEAEELMRKIEKEEEQLSYDDPDKKMYHLCIVNLVIGTLYCAKGNYDFGISRVIKSLEPYNKKLGTDTWYYAKRCFLSLLENMSKHTIMLRDSVIQECVQFLEHCELHGRNIPAVIEQPLEEERMHVGKNTVTYESRQLKALIYEIIGWNI</sequence>
<keyword id="KW-0966">Cell projection</keyword>
<keyword id="KW-0969">Cilium</keyword>
<keyword id="KW-0970">Cilium biogenesis/degradation</keyword>
<keyword id="KW-0175">Coiled coil</keyword>
<keyword id="KW-1267">Proteomics identification</keyword>
<keyword id="KW-1185">Reference proteome</keyword>
<keyword id="KW-0677">Repeat</keyword>
<keyword id="KW-0802">TPR repeat</keyword>
<proteinExistence type="evidence at protein level"/>
<name>IT70B_HUMAN</name>
<protein>
    <recommendedName>
        <fullName evidence="8">Intraflagellar transport protein 70B</fullName>
    </recommendedName>
    <alternativeName>
        <fullName>Tetratricopeptide repeat protein 30B</fullName>
        <shortName>TPR repeat protein 30B</shortName>
    </alternativeName>
</protein>
<comment type="function">
    <text evidence="1">Required for polyglutamylation of axonemal tubulin. Plays a role in anterograde intraflagellar transport (IFT), the process by which cilia precursors are transported from the base of the cilium to the site of their incorporation at the tip.</text>
</comment>
<comment type="subunit">
    <text evidence="2">Interacts with the IFT B complex components IFT27, IFT46, IFT74, IFT52, IFT57, IFT80, IFT81 and IFT88 (By similarity). Interacts with KIF17 (By similarity).</text>
</comment>
<comment type="interaction">
    <interactant intactId="EBI-6958994">
        <id>Q8N4P2</id>
    </interactant>
    <interactant intactId="EBI-6958971">
        <id>Q9BPU9</id>
        <label>B9D2</label>
    </interactant>
    <organismsDiffer>false</organismsDiffer>
    <experiments>2</experiments>
</comment>
<comment type="interaction">
    <interactant intactId="EBI-6958994">
        <id>Q8N4P2</id>
    </interactant>
    <interactant intactId="EBI-6959048">
        <id>Q62559</id>
        <label>Ift52</label>
    </interactant>
    <organismsDiffer>true</organismsDiffer>
    <experiments>2</experiments>
</comment>
<comment type="subcellular location">
    <subcellularLocation>
        <location evidence="1">Cell projection</location>
        <location evidence="1">Cilium</location>
    </subcellularLocation>
</comment>
<comment type="similarity">
    <text evidence="8">Belongs to the TTC30/dfy-1/fleer family.</text>
</comment>
<evidence type="ECO:0000250" key="1"/>
<evidence type="ECO:0000250" key="2">
    <source>
        <dbReference type="UniProtKB" id="Q9CY00"/>
    </source>
</evidence>
<evidence type="ECO:0000255" key="3"/>
<evidence type="ECO:0000256" key="4">
    <source>
        <dbReference type="SAM" id="MobiDB-lite"/>
    </source>
</evidence>
<evidence type="ECO:0000269" key="5">
    <source>
    </source>
</evidence>
<evidence type="ECO:0000269" key="6">
    <source>
    </source>
</evidence>
<evidence type="ECO:0000269" key="7">
    <source ref="3"/>
</evidence>
<evidence type="ECO:0000305" key="8"/>
<evidence type="ECO:0000312" key="9">
    <source>
        <dbReference type="HGNC" id="HGNC:26425"/>
    </source>
</evidence>
<feature type="chain" id="PRO_0000333201" description="Intraflagellar transport protein 70B">
    <location>
        <begin position="1"/>
        <end position="665"/>
    </location>
</feature>
<feature type="repeat" description="TPR 1">
    <location>
        <begin position="11"/>
        <end position="44"/>
    </location>
</feature>
<feature type="repeat" description="TPR 2">
    <location>
        <begin position="45"/>
        <end position="78"/>
    </location>
</feature>
<feature type="repeat" description="TPR 3">
    <location>
        <begin position="154"/>
        <end position="187"/>
    </location>
</feature>
<feature type="repeat" description="TPR 4">
    <location>
        <begin position="189"/>
        <end position="221"/>
    </location>
</feature>
<feature type="repeat" description="TPR 5">
    <location>
        <begin position="393"/>
        <end position="424"/>
    </location>
</feature>
<feature type="repeat" description="TPR 6">
    <location>
        <begin position="425"/>
        <end position="457"/>
    </location>
</feature>
<feature type="repeat" description="TPR 7">
    <location>
        <begin position="459"/>
        <end position="492"/>
    </location>
</feature>
<feature type="repeat" description="TPR 8">
    <location>
        <begin position="544"/>
        <end position="577"/>
    </location>
</feature>
<feature type="region of interest" description="Disordered" evidence="4">
    <location>
        <begin position="130"/>
        <end position="154"/>
    </location>
</feature>
<feature type="coiled-coil region" evidence="3">
    <location>
        <begin position="508"/>
        <end position="535"/>
    </location>
</feature>
<feature type="sequence variant" id="VAR_043124" description="In dbSNP:rs11694988." evidence="5 6 7">
    <original>R</original>
    <variation>H</variation>
    <location>
        <position position="117"/>
    </location>
</feature>
<feature type="sequence variant" id="VAR_043125" description="In dbSNP:rs2695315.">
    <original>I</original>
    <variation>V</variation>
    <location>
        <position position="446"/>
    </location>
</feature>
<feature type="sequence conflict" description="In Ref. 1; BAB70953." evidence="8" ref="1">
    <original>L</original>
    <variation>F</variation>
    <location>
        <position position="94"/>
    </location>
</feature>
<feature type="sequence conflict" description="In Ref. 1; BAB70953." evidence="8" ref="1">
    <location>
        <begin position="165"/>
        <end position="191"/>
    </location>
</feature>
<feature type="sequence conflict" description="In Ref. 1; BAB70953." evidence="8" ref="1">
    <original>I</original>
    <variation>T</variation>
    <location>
        <position position="366"/>
    </location>
</feature>
<feature type="sequence conflict" description="In Ref. 5; CAH56200." evidence="8" ref="5">
    <original>V</original>
    <variation>L</variation>
    <location>
        <position position="459"/>
    </location>
</feature>
<gene>
    <name evidence="9" type="primary">IFT70B</name>
    <name type="synonym">TTC30B</name>
</gene>
<organism>
    <name type="scientific">Homo sapiens</name>
    <name type="common">Human</name>
    <dbReference type="NCBI Taxonomy" id="9606"/>
    <lineage>
        <taxon>Eukaryota</taxon>
        <taxon>Metazoa</taxon>
        <taxon>Chordata</taxon>
        <taxon>Craniata</taxon>
        <taxon>Vertebrata</taxon>
        <taxon>Euteleostomi</taxon>
        <taxon>Mammalia</taxon>
        <taxon>Eutheria</taxon>
        <taxon>Euarchontoglires</taxon>
        <taxon>Primates</taxon>
        <taxon>Haplorrhini</taxon>
        <taxon>Catarrhini</taxon>
        <taxon>Hominidae</taxon>
        <taxon>Homo</taxon>
    </lineage>
</organism>
<accession>Q8N4P2</accession>
<accession>Q63HQ1</accession>
<accession>Q96NE6</accession>